<organism>
    <name type="scientific">Cyanothece sp. (strain PCC 7425 / ATCC 29141)</name>
    <dbReference type="NCBI Taxonomy" id="395961"/>
    <lineage>
        <taxon>Bacteria</taxon>
        <taxon>Bacillati</taxon>
        <taxon>Cyanobacteriota</taxon>
        <taxon>Cyanophyceae</taxon>
        <taxon>Gomontiellales</taxon>
        <taxon>Cyanothecaceae</taxon>
        <taxon>Cyanothece</taxon>
    </lineage>
</organism>
<gene>
    <name evidence="1" type="primary">ackA</name>
    <name type="ordered locus">Cyan7425_2207</name>
</gene>
<comment type="function">
    <text evidence="1">Catalyzes the formation of acetyl phosphate from acetate and ATP. Can also catalyze the reverse reaction.</text>
</comment>
<comment type="catalytic activity">
    <reaction evidence="1">
        <text>acetate + ATP = acetyl phosphate + ADP</text>
        <dbReference type="Rhea" id="RHEA:11352"/>
        <dbReference type="ChEBI" id="CHEBI:22191"/>
        <dbReference type="ChEBI" id="CHEBI:30089"/>
        <dbReference type="ChEBI" id="CHEBI:30616"/>
        <dbReference type="ChEBI" id="CHEBI:456216"/>
        <dbReference type="EC" id="2.7.2.1"/>
    </reaction>
</comment>
<comment type="cofactor">
    <cofactor evidence="1">
        <name>Mg(2+)</name>
        <dbReference type="ChEBI" id="CHEBI:18420"/>
    </cofactor>
    <cofactor evidence="1">
        <name>Mn(2+)</name>
        <dbReference type="ChEBI" id="CHEBI:29035"/>
    </cofactor>
    <text evidence="1">Mg(2+). Can also accept Mn(2+).</text>
</comment>
<comment type="pathway">
    <text evidence="1">Metabolic intermediate biosynthesis; acetyl-CoA biosynthesis; acetyl-CoA from acetate: step 1/2.</text>
</comment>
<comment type="subunit">
    <text evidence="1">Homodimer.</text>
</comment>
<comment type="subcellular location">
    <subcellularLocation>
        <location evidence="1">Cytoplasm</location>
    </subcellularLocation>
</comment>
<comment type="similarity">
    <text evidence="1">Belongs to the acetokinase family.</text>
</comment>
<name>ACKA_CYAP4</name>
<feature type="chain" id="PRO_1000116799" description="Acetate kinase">
    <location>
        <begin position="1"/>
        <end position="408"/>
    </location>
</feature>
<feature type="active site" description="Proton donor/acceptor" evidence="1">
    <location>
        <position position="155"/>
    </location>
</feature>
<feature type="binding site" evidence="1">
    <location>
        <position position="7"/>
    </location>
    <ligand>
        <name>Mg(2+)</name>
        <dbReference type="ChEBI" id="CHEBI:18420"/>
    </ligand>
</feature>
<feature type="binding site" evidence="1">
    <location>
        <position position="14"/>
    </location>
    <ligand>
        <name>ATP</name>
        <dbReference type="ChEBI" id="CHEBI:30616"/>
    </ligand>
</feature>
<feature type="binding site" evidence="1">
    <location>
        <position position="98"/>
    </location>
    <ligand>
        <name>substrate</name>
    </ligand>
</feature>
<feature type="binding site" evidence="1">
    <location>
        <begin position="214"/>
        <end position="218"/>
    </location>
    <ligand>
        <name>ATP</name>
        <dbReference type="ChEBI" id="CHEBI:30616"/>
    </ligand>
</feature>
<feature type="binding site" evidence="1">
    <location>
        <begin position="289"/>
        <end position="291"/>
    </location>
    <ligand>
        <name>ATP</name>
        <dbReference type="ChEBI" id="CHEBI:30616"/>
    </ligand>
</feature>
<feature type="binding site" evidence="1">
    <location>
        <begin position="337"/>
        <end position="341"/>
    </location>
    <ligand>
        <name>ATP</name>
        <dbReference type="ChEBI" id="CHEBI:30616"/>
    </ligand>
</feature>
<feature type="binding site" evidence="1">
    <location>
        <position position="390"/>
    </location>
    <ligand>
        <name>Mg(2+)</name>
        <dbReference type="ChEBI" id="CHEBI:18420"/>
    </ligand>
</feature>
<feature type="site" description="Transition state stabilizer" evidence="1">
    <location>
        <position position="186"/>
    </location>
</feature>
<feature type="site" description="Transition state stabilizer" evidence="1">
    <location>
        <position position="247"/>
    </location>
</feature>
<dbReference type="EC" id="2.7.2.1" evidence="1"/>
<dbReference type="EMBL" id="CP001344">
    <property type="protein sequence ID" value="ACL44568.1"/>
    <property type="molecule type" value="Genomic_DNA"/>
</dbReference>
<dbReference type="SMR" id="B8HVB6"/>
<dbReference type="STRING" id="395961.Cyan7425_2207"/>
<dbReference type="KEGG" id="cyn:Cyan7425_2207"/>
<dbReference type="eggNOG" id="COG0282">
    <property type="taxonomic scope" value="Bacteria"/>
</dbReference>
<dbReference type="HOGENOM" id="CLU_020352_0_1_3"/>
<dbReference type="OrthoDB" id="9802453at2"/>
<dbReference type="UniPathway" id="UPA00340">
    <property type="reaction ID" value="UER00458"/>
</dbReference>
<dbReference type="GO" id="GO:0005737">
    <property type="term" value="C:cytoplasm"/>
    <property type="evidence" value="ECO:0007669"/>
    <property type="project" value="UniProtKB-SubCell"/>
</dbReference>
<dbReference type="GO" id="GO:0008776">
    <property type="term" value="F:acetate kinase activity"/>
    <property type="evidence" value="ECO:0007669"/>
    <property type="project" value="UniProtKB-UniRule"/>
</dbReference>
<dbReference type="GO" id="GO:0005524">
    <property type="term" value="F:ATP binding"/>
    <property type="evidence" value="ECO:0007669"/>
    <property type="project" value="UniProtKB-KW"/>
</dbReference>
<dbReference type="GO" id="GO:0000287">
    <property type="term" value="F:magnesium ion binding"/>
    <property type="evidence" value="ECO:0007669"/>
    <property type="project" value="UniProtKB-UniRule"/>
</dbReference>
<dbReference type="GO" id="GO:0006083">
    <property type="term" value="P:acetate metabolic process"/>
    <property type="evidence" value="ECO:0007669"/>
    <property type="project" value="TreeGrafter"/>
</dbReference>
<dbReference type="GO" id="GO:0006085">
    <property type="term" value="P:acetyl-CoA biosynthetic process"/>
    <property type="evidence" value="ECO:0007669"/>
    <property type="project" value="UniProtKB-UniRule"/>
</dbReference>
<dbReference type="CDD" id="cd24010">
    <property type="entry name" value="ASKHA_NBD_AcK_PK"/>
    <property type="match status" value="1"/>
</dbReference>
<dbReference type="Gene3D" id="3.30.420.40">
    <property type="match status" value="2"/>
</dbReference>
<dbReference type="HAMAP" id="MF_00020">
    <property type="entry name" value="Acetate_kinase"/>
    <property type="match status" value="1"/>
</dbReference>
<dbReference type="InterPro" id="IPR004372">
    <property type="entry name" value="Ac/propionate_kinase"/>
</dbReference>
<dbReference type="InterPro" id="IPR000890">
    <property type="entry name" value="Aliphatic_acid_kin_short-chain"/>
</dbReference>
<dbReference type="InterPro" id="IPR023865">
    <property type="entry name" value="Aliphatic_acid_kinase_CS"/>
</dbReference>
<dbReference type="InterPro" id="IPR043129">
    <property type="entry name" value="ATPase_NBD"/>
</dbReference>
<dbReference type="NCBIfam" id="TIGR00016">
    <property type="entry name" value="ackA"/>
    <property type="match status" value="1"/>
</dbReference>
<dbReference type="PANTHER" id="PTHR21060">
    <property type="entry name" value="ACETATE KINASE"/>
    <property type="match status" value="1"/>
</dbReference>
<dbReference type="PANTHER" id="PTHR21060:SF15">
    <property type="entry name" value="ACETATE KINASE-RELATED"/>
    <property type="match status" value="1"/>
</dbReference>
<dbReference type="Pfam" id="PF00871">
    <property type="entry name" value="Acetate_kinase"/>
    <property type="match status" value="1"/>
</dbReference>
<dbReference type="PIRSF" id="PIRSF000722">
    <property type="entry name" value="Acetate_prop_kin"/>
    <property type="match status" value="1"/>
</dbReference>
<dbReference type="PRINTS" id="PR00471">
    <property type="entry name" value="ACETATEKNASE"/>
</dbReference>
<dbReference type="SUPFAM" id="SSF53067">
    <property type="entry name" value="Actin-like ATPase domain"/>
    <property type="match status" value="2"/>
</dbReference>
<dbReference type="PROSITE" id="PS01075">
    <property type="entry name" value="ACETATE_KINASE_1"/>
    <property type="match status" value="1"/>
</dbReference>
<dbReference type="PROSITE" id="PS01076">
    <property type="entry name" value="ACETATE_KINASE_2"/>
    <property type="match status" value="1"/>
</dbReference>
<protein>
    <recommendedName>
        <fullName evidence="1">Acetate kinase</fullName>
        <ecNumber evidence="1">2.7.2.1</ecNumber>
    </recommendedName>
    <alternativeName>
        <fullName evidence="1">Acetokinase</fullName>
    </alternativeName>
</protein>
<proteinExistence type="inferred from homology"/>
<keyword id="KW-0067">ATP-binding</keyword>
<keyword id="KW-0963">Cytoplasm</keyword>
<keyword id="KW-0418">Kinase</keyword>
<keyword id="KW-0460">Magnesium</keyword>
<keyword id="KW-0479">Metal-binding</keyword>
<keyword id="KW-0547">Nucleotide-binding</keyword>
<keyword id="KW-0808">Transferase</keyword>
<accession>B8HVB6</accession>
<evidence type="ECO:0000255" key="1">
    <source>
        <dbReference type="HAMAP-Rule" id="MF_00020"/>
    </source>
</evidence>
<reference key="1">
    <citation type="journal article" date="2011" name="MBio">
        <title>Novel metabolic attributes of the genus Cyanothece, comprising a group of unicellular nitrogen-fixing Cyanobacteria.</title>
        <authorList>
            <person name="Bandyopadhyay A."/>
            <person name="Elvitigala T."/>
            <person name="Welsh E."/>
            <person name="Stockel J."/>
            <person name="Liberton M."/>
            <person name="Min H."/>
            <person name="Sherman L.A."/>
            <person name="Pakrasi H.B."/>
        </authorList>
    </citation>
    <scope>NUCLEOTIDE SEQUENCE [LARGE SCALE GENOMIC DNA]</scope>
    <source>
        <strain>PCC 7425 / ATCC 29141</strain>
    </source>
</reference>
<sequence>MKILVLNAGSSSQKSCLYEIQSEPSSQPPSPLWEGKVDWTHEQGYAEIEVKTSTGACLQEKIAADSRPIVISHLLATLWQGDTQVIDQPNEIAVVGHRVVHGGAEYRKSVFITAEVKAAIARLASFAPVHNPANLEGIEAVETLFGNIPQVAVFDTAFHAHLPLAAAIYPGPYEWYEQGIRRYGFHGISHRYCAERAAQLLDRDLSSLRLITCHLGNGCSLAAIQNGISIETTMGFTPMEGLMMGSRSGSIDPGILIHLLRHQGYSADKLDQVLNKQSGLLGVSGISADLRRIDQAIAAGNDRAKLALEIYIHRLQSAIGACLPHLGGLDALIFTAGVGENSATVRAATCAGFEYLNWQIDQDQNQPSAQDRDIATPDSAVRILVIHTQEDWAIAQDCWQLIQTNSQS</sequence>